<accession>B2I663</accession>
<feature type="chain" id="PRO_1000097635" description="3-dehydroquinate dehydratase">
    <location>
        <begin position="1"/>
        <end position="148"/>
    </location>
</feature>
<feature type="active site" description="Proton acceptor" evidence="1">
    <location>
        <position position="23"/>
    </location>
</feature>
<feature type="active site" description="Proton donor" evidence="1">
    <location>
        <position position="101"/>
    </location>
</feature>
<feature type="binding site" evidence="1">
    <location>
        <position position="75"/>
    </location>
    <ligand>
        <name>substrate</name>
    </ligand>
</feature>
<feature type="binding site" evidence="1">
    <location>
        <position position="81"/>
    </location>
    <ligand>
        <name>substrate</name>
    </ligand>
</feature>
<feature type="binding site" evidence="1">
    <location>
        <position position="88"/>
    </location>
    <ligand>
        <name>substrate</name>
    </ligand>
</feature>
<feature type="binding site" evidence="1">
    <location>
        <begin position="102"/>
        <end position="103"/>
    </location>
    <ligand>
        <name>substrate</name>
    </ligand>
</feature>
<feature type="binding site" evidence="1">
    <location>
        <position position="112"/>
    </location>
    <ligand>
        <name>substrate</name>
    </ligand>
</feature>
<feature type="site" description="Transition state stabilizer" evidence="1">
    <location>
        <position position="18"/>
    </location>
</feature>
<evidence type="ECO:0000255" key="1">
    <source>
        <dbReference type="HAMAP-Rule" id="MF_00169"/>
    </source>
</evidence>
<reference key="1">
    <citation type="journal article" date="2010" name="J. Bacteriol.">
        <title>Whole genome sequences of two Xylella fastidiosa strains (M12 and M23) causing almond leaf scorch disease in California.</title>
        <authorList>
            <person name="Chen J."/>
            <person name="Xie G."/>
            <person name="Han S."/>
            <person name="Chertkov O."/>
            <person name="Sims D."/>
            <person name="Civerolo E.L."/>
        </authorList>
    </citation>
    <scope>NUCLEOTIDE SEQUENCE [LARGE SCALE GENOMIC DNA]</scope>
    <source>
        <strain>M23</strain>
    </source>
</reference>
<protein>
    <recommendedName>
        <fullName evidence="1">3-dehydroquinate dehydratase</fullName>
        <shortName evidence="1">3-dehydroquinase</shortName>
        <ecNumber evidence="1">4.2.1.10</ecNumber>
    </recommendedName>
    <alternativeName>
        <fullName evidence="1">Type II DHQase</fullName>
    </alternativeName>
</protein>
<name>AROQ_XYLF2</name>
<proteinExistence type="inferred from homology"/>
<organism>
    <name type="scientific">Xylella fastidiosa (strain M23)</name>
    <dbReference type="NCBI Taxonomy" id="405441"/>
    <lineage>
        <taxon>Bacteria</taxon>
        <taxon>Pseudomonadati</taxon>
        <taxon>Pseudomonadota</taxon>
        <taxon>Gammaproteobacteria</taxon>
        <taxon>Lysobacterales</taxon>
        <taxon>Lysobacteraceae</taxon>
        <taxon>Xylella</taxon>
    </lineage>
</organism>
<comment type="function">
    <text evidence="1">Catalyzes a trans-dehydration via an enolate intermediate.</text>
</comment>
<comment type="catalytic activity">
    <reaction evidence="1">
        <text>3-dehydroquinate = 3-dehydroshikimate + H2O</text>
        <dbReference type="Rhea" id="RHEA:21096"/>
        <dbReference type="ChEBI" id="CHEBI:15377"/>
        <dbReference type="ChEBI" id="CHEBI:16630"/>
        <dbReference type="ChEBI" id="CHEBI:32364"/>
        <dbReference type="EC" id="4.2.1.10"/>
    </reaction>
</comment>
<comment type="pathway">
    <text evidence="1">Metabolic intermediate biosynthesis; chorismate biosynthesis; chorismate from D-erythrose 4-phosphate and phosphoenolpyruvate: step 3/7.</text>
</comment>
<comment type="subunit">
    <text evidence="1">Homododecamer.</text>
</comment>
<comment type="similarity">
    <text evidence="1">Belongs to the type-II 3-dehydroquinase family.</text>
</comment>
<gene>
    <name evidence="1" type="primary">aroQ</name>
    <name type="ordered locus">XfasM23_0032</name>
</gene>
<keyword id="KW-0028">Amino-acid biosynthesis</keyword>
<keyword id="KW-0057">Aromatic amino acid biosynthesis</keyword>
<keyword id="KW-0456">Lyase</keyword>
<dbReference type="EC" id="4.2.1.10" evidence="1"/>
<dbReference type="EMBL" id="CP001011">
    <property type="protein sequence ID" value="ACB91490.1"/>
    <property type="molecule type" value="Genomic_DNA"/>
</dbReference>
<dbReference type="RefSeq" id="WP_004087115.1">
    <property type="nucleotide sequence ID" value="NC_010577.1"/>
</dbReference>
<dbReference type="SMR" id="B2I663"/>
<dbReference type="GeneID" id="93903724"/>
<dbReference type="KEGG" id="xfn:XfasM23_0032"/>
<dbReference type="HOGENOM" id="CLU_090968_1_0_6"/>
<dbReference type="UniPathway" id="UPA00053">
    <property type="reaction ID" value="UER00086"/>
</dbReference>
<dbReference type="Proteomes" id="UP000001698">
    <property type="component" value="Chromosome"/>
</dbReference>
<dbReference type="GO" id="GO:0003855">
    <property type="term" value="F:3-dehydroquinate dehydratase activity"/>
    <property type="evidence" value="ECO:0007669"/>
    <property type="project" value="UniProtKB-UniRule"/>
</dbReference>
<dbReference type="GO" id="GO:0008652">
    <property type="term" value="P:amino acid biosynthetic process"/>
    <property type="evidence" value="ECO:0007669"/>
    <property type="project" value="UniProtKB-KW"/>
</dbReference>
<dbReference type="GO" id="GO:0009073">
    <property type="term" value="P:aromatic amino acid family biosynthetic process"/>
    <property type="evidence" value="ECO:0007669"/>
    <property type="project" value="UniProtKB-KW"/>
</dbReference>
<dbReference type="GO" id="GO:0009423">
    <property type="term" value="P:chorismate biosynthetic process"/>
    <property type="evidence" value="ECO:0007669"/>
    <property type="project" value="UniProtKB-UniRule"/>
</dbReference>
<dbReference type="GO" id="GO:0019631">
    <property type="term" value="P:quinate catabolic process"/>
    <property type="evidence" value="ECO:0007669"/>
    <property type="project" value="TreeGrafter"/>
</dbReference>
<dbReference type="CDD" id="cd00466">
    <property type="entry name" value="DHQase_II"/>
    <property type="match status" value="1"/>
</dbReference>
<dbReference type="Gene3D" id="3.40.50.9100">
    <property type="entry name" value="Dehydroquinase, class II"/>
    <property type="match status" value="1"/>
</dbReference>
<dbReference type="HAMAP" id="MF_00169">
    <property type="entry name" value="AroQ"/>
    <property type="match status" value="1"/>
</dbReference>
<dbReference type="InterPro" id="IPR001874">
    <property type="entry name" value="DHquinase_II"/>
</dbReference>
<dbReference type="InterPro" id="IPR018509">
    <property type="entry name" value="DHquinase_II_CS"/>
</dbReference>
<dbReference type="InterPro" id="IPR036441">
    <property type="entry name" value="DHquinase_II_sf"/>
</dbReference>
<dbReference type="NCBIfam" id="TIGR01088">
    <property type="entry name" value="aroQ"/>
    <property type="match status" value="1"/>
</dbReference>
<dbReference type="NCBIfam" id="NF003804">
    <property type="entry name" value="PRK05395.1-1"/>
    <property type="match status" value="1"/>
</dbReference>
<dbReference type="NCBIfam" id="NF003805">
    <property type="entry name" value="PRK05395.1-2"/>
    <property type="match status" value="1"/>
</dbReference>
<dbReference type="NCBIfam" id="NF003806">
    <property type="entry name" value="PRK05395.1-3"/>
    <property type="match status" value="1"/>
</dbReference>
<dbReference type="NCBIfam" id="NF003807">
    <property type="entry name" value="PRK05395.1-4"/>
    <property type="match status" value="1"/>
</dbReference>
<dbReference type="PANTHER" id="PTHR21272">
    <property type="entry name" value="CATABOLIC 3-DEHYDROQUINASE"/>
    <property type="match status" value="1"/>
</dbReference>
<dbReference type="PANTHER" id="PTHR21272:SF3">
    <property type="entry name" value="CATABOLIC 3-DEHYDROQUINASE"/>
    <property type="match status" value="1"/>
</dbReference>
<dbReference type="Pfam" id="PF01220">
    <property type="entry name" value="DHquinase_II"/>
    <property type="match status" value="1"/>
</dbReference>
<dbReference type="PIRSF" id="PIRSF001399">
    <property type="entry name" value="DHquinase_II"/>
    <property type="match status" value="1"/>
</dbReference>
<dbReference type="SUPFAM" id="SSF52304">
    <property type="entry name" value="Type II 3-dehydroquinate dehydratase"/>
    <property type="match status" value="1"/>
</dbReference>
<dbReference type="PROSITE" id="PS01029">
    <property type="entry name" value="DEHYDROQUINASE_II"/>
    <property type="match status" value="1"/>
</dbReference>
<sequence length="148" mass="15952">MAHLLLLHGPNLNLLGTREPEIYGRITLPQIDAALAERAATAGHGLSSLQSNAEHVLIERIHATREDGTAFILINPGAFTHTSVALRDALLAVALPFVEIHLSNPHTREPFRHHSYLADKALGVVCGFGVDSYRIALEGVIARLGSDV</sequence>